<feature type="chain" id="PRO_1000202990" description="Deoxyuridine 5'-triphosphate nucleotidohydrolase">
    <location>
        <begin position="1"/>
        <end position="148"/>
    </location>
</feature>
<feature type="binding site" evidence="1">
    <location>
        <begin position="68"/>
        <end position="70"/>
    </location>
    <ligand>
        <name>substrate</name>
    </ligand>
</feature>
<feature type="binding site" evidence="1">
    <location>
        <position position="81"/>
    </location>
    <ligand>
        <name>substrate</name>
    </ligand>
</feature>
<feature type="binding site" evidence="1">
    <location>
        <begin position="85"/>
        <end position="87"/>
    </location>
    <ligand>
        <name>substrate</name>
    </ligand>
</feature>
<feature type="binding site" evidence="1">
    <location>
        <position position="95"/>
    </location>
    <ligand>
        <name>substrate</name>
    </ligand>
</feature>
<protein>
    <recommendedName>
        <fullName evidence="1">Deoxyuridine 5'-triphosphate nucleotidohydrolase</fullName>
        <shortName evidence="1">dUTPase</shortName>
        <ecNumber evidence="1">3.6.1.23</ecNumber>
    </recommendedName>
    <alternativeName>
        <fullName evidence="1">dUTP pyrophosphatase</fullName>
    </alternativeName>
</protein>
<accession>C4K2C2</accession>
<keyword id="KW-0378">Hydrolase</keyword>
<keyword id="KW-0460">Magnesium</keyword>
<keyword id="KW-0479">Metal-binding</keyword>
<keyword id="KW-0546">Nucleotide metabolism</keyword>
<proteinExistence type="inferred from homology"/>
<comment type="function">
    <text evidence="1">This enzyme is involved in nucleotide metabolism: it produces dUMP, the immediate precursor of thymidine nucleotides and it decreases the intracellular concentration of dUTP so that uracil cannot be incorporated into DNA.</text>
</comment>
<comment type="catalytic activity">
    <reaction evidence="1">
        <text>dUTP + H2O = dUMP + diphosphate + H(+)</text>
        <dbReference type="Rhea" id="RHEA:10248"/>
        <dbReference type="ChEBI" id="CHEBI:15377"/>
        <dbReference type="ChEBI" id="CHEBI:15378"/>
        <dbReference type="ChEBI" id="CHEBI:33019"/>
        <dbReference type="ChEBI" id="CHEBI:61555"/>
        <dbReference type="ChEBI" id="CHEBI:246422"/>
        <dbReference type="EC" id="3.6.1.23"/>
    </reaction>
</comment>
<comment type="cofactor">
    <cofactor evidence="1">
        <name>Mg(2+)</name>
        <dbReference type="ChEBI" id="CHEBI:18420"/>
    </cofactor>
</comment>
<comment type="pathway">
    <text evidence="1">Pyrimidine metabolism; dUMP biosynthesis; dUMP from dCTP (dUTP route): step 2/2.</text>
</comment>
<comment type="similarity">
    <text evidence="1">Belongs to the dUTPase family.</text>
</comment>
<evidence type="ECO:0000255" key="1">
    <source>
        <dbReference type="HAMAP-Rule" id="MF_00116"/>
    </source>
</evidence>
<name>DUT_RICPU</name>
<sequence>MTITQVKIKKLENFSGSLPEYATEHSAGMDLIAANEQPITIKAAAIQLIPTGIAIALPDSFEAQIRPRSGLAVKHGITVANSPGTIDADYRGEIKVILINLGKEDFIIEKGMRIAQMIIAKYERILWEESISLMETMRGSGGFGSTSV</sequence>
<reference key="1">
    <citation type="journal article" date="2009" name="PLoS ONE">
        <title>Genome sequence of the endosymbiont Rickettsia peacockii and comparison with virulent Rickettsia rickettsii: identification of virulence factors.</title>
        <authorList>
            <person name="Felsheim R.F."/>
            <person name="Kurtti T.J."/>
            <person name="Munderloh U.G."/>
        </authorList>
    </citation>
    <scope>NUCLEOTIDE SEQUENCE [LARGE SCALE GENOMIC DNA]</scope>
    <source>
        <strain>Rustic</strain>
    </source>
</reference>
<gene>
    <name evidence="1" type="primary">dut</name>
    <name type="ordered locus">RPR_05795</name>
</gene>
<dbReference type="EC" id="3.6.1.23" evidence="1"/>
<dbReference type="EMBL" id="CP001227">
    <property type="protein sequence ID" value="ACR47719.1"/>
    <property type="molecule type" value="Genomic_DNA"/>
</dbReference>
<dbReference type="RefSeq" id="WP_012736912.1">
    <property type="nucleotide sequence ID" value="NC_012730.1"/>
</dbReference>
<dbReference type="SMR" id="C4K2C2"/>
<dbReference type="KEGG" id="rpk:RPR_05795"/>
<dbReference type="HOGENOM" id="CLU_068508_1_2_5"/>
<dbReference type="UniPathway" id="UPA00610">
    <property type="reaction ID" value="UER00666"/>
</dbReference>
<dbReference type="Proteomes" id="UP000005015">
    <property type="component" value="Chromosome"/>
</dbReference>
<dbReference type="GO" id="GO:0004170">
    <property type="term" value="F:dUTP diphosphatase activity"/>
    <property type="evidence" value="ECO:0007669"/>
    <property type="project" value="UniProtKB-UniRule"/>
</dbReference>
<dbReference type="GO" id="GO:0000287">
    <property type="term" value="F:magnesium ion binding"/>
    <property type="evidence" value="ECO:0007669"/>
    <property type="project" value="UniProtKB-UniRule"/>
</dbReference>
<dbReference type="GO" id="GO:0006226">
    <property type="term" value="P:dUMP biosynthetic process"/>
    <property type="evidence" value="ECO:0007669"/>
    <property type="project" value="UniProtKB-UniRule"/>
</dbReference>
<dbReference type="GO" id="GO:0046081">
    <property type="term" value="P:dUTP catabolic process"/>
    <property type="evidence" value="ECO:0007669"/>
    <property type="project" value="InterPro"/>
</dbReference>
<dbReference type="CDD" id="cd07557">
    <property type="entry name" value="trimeric_dUTPase"/>
    <property type="match status" value="1"/>
</dbReference>
<dbReference type="FunFam" id="2.70.40.10:FF:000002">
    <property type="entry name" value="dUTP diphosphatase"/>
    <property type="match status" value="1"/>
</dbReference>
<dbReference type="Gene3D" id="2.70.40.10">
    <property type="match status" value="1"/>
</dbReference>
<dbReference type="HAMAP" id="MF_00116">
    <property type="entry name" value="dUTPase_bact"/>
    <property type="match status" value="1"/>
</dbReference>
<dbReference type="InterPro" id="IPR008181">
    <property type="entry name" value="dUTPase"/>
</dbReference>
<dbReference type="InterPro" id="IPR029054">
    <property type="entry name" value="dUTPase-like"/>
</dbReference>
<dbReference type="InterPro" id="IPR036157">
    <property type="entry name" value="dUTPase-like_sf"/>
</dbReference>
<dbReference type="InterPro" id="IPR033704">
    <property type="entry name" value="dUTPase_trimeric"/>
</dbReference>
<dbReference type="NCBIfam" id="TIGR00576">
    <property type="entry name" value="dut"/>
    <property type="match status" value="1"/>
</dbReference>
<dbReference type="NCBIfam" id="NF001862">
    <property type="entry name" value="PRK00601.1"/>
    <property type="match status" value="1"/>
</dbReference>
<dbReference type="PANTHER" id="PTHR11241">
    <property type="entry name" value="DEOXYURIDINE 5'-TRIPHOSPHATE NUCLEOTIDOHYDROLASE"/>
    <property type="match status" value="1"/>
</dbReference>
<dbReference type="PANTHER" id="PTHR11241:SF0">
    <property type="entry name" value="DEOXYURIDINE 5'-TRIPHOSPHATE NUCLEOTIDOHYDROLASE"/>
    <property type="match status" value="1"/>
</dbReference>
<dbReference type="Pfam" id="PF00692">
    <property type="entry name" value="dUTPase"/>
    <property type="match status" value="1"/>
</dbReference>
<dbReference type="SUPFAM" id="SSF51283">
    <property type="entry name" value="dUTPase-like"/>
    <property type="match status" value="1"/>
</dbReference>
<organism>
    <name type="scientific">Rickettsia peacockii (strain Rustic)</name>
    <dbReference type="NCBI Taxonomy" id="562019"/>
    <lineage>
        <taxon>Bacteria</taxon>
        <taxon>Pseudomonadati</taxon>
        <taxon>Pseudomonadota</taxon>
        <taxon>Alphaproteobacteria</taxon>
        <taxon>Rickettsiales</taxon>
        <taxon>Rickettsiaceae</taxon>
        <taxon>Rickettsieae</taxon>
        <taxon>Rickettsia</taxon>
        <taxon>spotted fever group</taxon>
    </lineage>
</organism>